<protein>
    <recommendedName>
        <fullName>Cecropin-B</fullName>
    </recommendedName>
</protein>
<comment type="function">
    <text>Cecropins have lytic and antibacterial activity against several Gram-positive and Gram-negative bacteria.</text>
</comment>
<comment type="subcellular location">
    <subcellularLocation>
        <location>Secreted</location>
    </subcellularLocation>
</comment>
<comment type="tissue specificity">
    <text evidence="2">Strongly expressed in larval, pupal and adult fat body and hemocytes after injection of bacteria. Maximal expression is seen in pupae.</text>
</comment>
<comment type="induction">
    <text evidence="2">Induced as part of the humoral response to a bacterial invasion. Transcripts appear within one hour after injection of bacteria into the hemocoel, reach a maximum after 2-6 hours and have almost disappeared after 24 hours. Similar response is seen when flies ingest bacteria present in their food.</text>
</comment>
<comment type="similarity">
    <text evidence="6">Belongs to the cecropin family.</text>
</comment>
<organism>
    <name type="scientific">Drosophila melanogaster</name>
    <name type="common">Fruit fly</name>
    <dbReference type="NCBI Taxonomy" id="7227"/>
    <lineage>
        <taxon>Eukaryota</taxon>
        <taxon>Metazoa</taxon>
        <taxon>Ecdysozoa</taxon>
        <taxon>Arthropoda</taxon>
        <taxon>Hexapoda</taxon>
        <taxon>Insecta</taxon>
        <taxon>Pterygota</taxon>
        <taxon>Neoptera</taxon>
        <taxon>Endopterygota</taxon>
        <taxon>Diptera</taxon>
        <taxon>Brachycera</taxon>
        <taxon>Muscomorpha</taxon>
        <taxon>Ephydroidea</taxon>
        <taxon>Drosophilidae</taxon>
        <taxon>Drosophila</taxon>
        <taxon>Sophophora</taxon>
    </lineage>
</organism>
<proteinExistence type="evidence at transcript level"/>
<dbReference type="EMBL" id="X16972">
    <property type="protein sequence ID" value="CAA34845.1"/>
    <property type="molecule type" value="Genomic_DNA"/>
</dbReference>
<dbReference type="EMBL" id="AF018994">
    <property type="protein sequence ID" value="AAB82491.1"/>
    <property type="molecule type" value="Genomic_DNA"/>
</dbReference>
<dbReference type="EMBL" id="AF018995">
    <property type="protein sequence ID" value="AAB82492.1"/>
    <property type="molecule type" value="Genomic_DNA"/>
</dbReference>
<dbReference type="EMBL" id="AF018996">
    <property type="protein sequence ID" value="AAB82493.1"/>
    <property type="molecule type" value="Genomic_DNA"/>
</dbReference>
<dbReference type="EMBL" id="AF018997">
    <property type="protein sequence ID" value="AAB82494.1"/>
    <property type="molecule type" value="Genomic_DNA"/>
</dbReference>
<dbReference type="EMBL" id="AF018998">
    <property type="protein sequence ID" value="AAB82495.1"/>
    <property type="molecule type" value="Genomic_DNA"/>
</dbReference>
<dbReference type="EMBL" id="AF018999">
    <property type="protein sequence ID" value="AAB82496.1"/>
    <property type="molecule type" value="Genomic_DNA"/>
</dbReference>
<dbReference type="EMBL" id="AF019000">
    <property type="protein sequence ID" value="AAB82497.1"/>
    <property type="molecule type" value="Genomic_DNA"/>
</dbReference>
<dbReference type="EMBL" id="AF019001">
    <property type="protein sequence ID" value="AAB82498.1"/>
    <property type="molecule type" value="Genomic_DNA"/>
</dbReference>
<dbReference type="EMBL" id="AF019002">
    <property type="protein sequence ID" value="AAB82499.1"/>
    <property type="molecule type" value="Genomic_DNA"/>
</dbReference>
<dbReference type="EMBL" id="AF019003">
    <property type="protein sequence ID" value="AAB82500.1"/>
    <property type="molecule type" value="Genomic_DNA"/>
</dbReference>
<dbReference type="EMBL" id="AF019004">
    <property type="protein sequence ID" value="AAB82501.1"/>
    <property type="molecule type" value="Genomic_DNA"/>
</dbReference>
<dbReference type="EMBL" id="AF019005">
    <property type="protein sequence ID" value="AAB82502.1"/>
    <property type="molecule type" value="Genomic_DNA"/>
</dbReference>
<dbReference type="EMBL" id="Y16852">
    <property type="protein sequence ID" value="CAA76429.1"/>
    <property type="molecule type" value="Genomic_DNA"/>
</dbReference>
<dbReference type="EMBL" id="Y16853">
    <property type="protein sequence ID" value="CAA76435.1"/>
    <property type="molecule type" value="Genomic_DNA"/>
</dbReference>
<dbReference type="EMBL" id="Y16854">
    <property type="protein sequence ID" value="CAA76441.1"/>
    <property type="molecule type" value="Genomic_DNA"/>
</dbReference>
<dbReference type="EMBL" id="Y16855">
    <property type="protein sequence ID" value="CAA76447.1"/>
    <property type="molecule type" value="Genomic_DNA"/>
</dbReference>
<dbReference type="EMBL" id="Y16856">
    <property type="protein sequence ID" value="CAA76453.1"/>
    <property type="molecule type" value="Genomic_DNA"/>
</dbReference>
<dbReference type="EMBL" id="Y16858">
    <property type="protein sequence ID" value="CAA76465.1"/>
    <property type="molecule type" value="Genomic_DNA"/>
</dbReference>
<dbReference type="EMBL" id="Y16859">
    <property type="protein sequence ID" value="CAA76471.1"/>
    <property type="molecule type" value="Genomic_DNA"/>
</dbReference>
<dbReference type="EMBL" id="Y16861">
    <property type="protein sequence ID" value="CAA76481.1"/>
    <property type="molecule type" value="Genomic_DNA"/>
</dbReference>
<dbReference type="EMBL" id="AB010791">
    <property type="protein sequence ID" value="BAA28722.1"/>
    <property type="molecule type" value="Genomic_DNA"/>
</dbReference>
<dbReference type="EMBL" id="AB010792">
    <property type="protein sequence ID" value="BAA28726.1"/>
    <property type="molecule type" value="Genomic_DNA"/>
</dbReference>
<dbReference type="EMBL" id="AB010793">
    <property type="protein sequence ID" value="BAA28729.1"/>
    <property type="molecule type" value="Genomic_DNA"/>
</dbReference>
<dbReference type="EMBL" id="AB010794">
    <property type="protein sequence ID" value="BAA28733.1"/>
    <property type="molecule type" value="Genomic_DNA"/>
</dbReference>
<dbReference type="EMBL" id="AB010795">
    <property type="protein sequence ID" value="BAA28735.1"/>
    <property type="molecule type" value="Genomic_DNA"/>
</dbReference>
<dbReference type="EMBL" id="AB010796">
    <property type="protein sequence ID" value="BAA28739.1"/>
    <property type="molecule type" value="Genomic_DNA"/>
</dbReference>
<dbReference type="EMBL" id="AE014297">
    <property type="protein sequence ID" value="AAF57027.1"/>
    <property type="molecule type" value="Genomic_DNA"/>
</dbReference>
<dbReference type="PIR" id="S07666">
    <property type="entry name" value="S07666"/>
</dbReference>
<dbReference type="RefSeq" id="NP_524590.1">
    <property type="nucleotide sequence ID" value="NM_079851.3"/>
</dbReference>
<dbReference type="DIP" id="DIP-22949N"/>
<dbReference type="FunCoup" id="P14956">
    <property type="interactions" value="90"/>
</dbReference>
<dbReference type="STRING" id="7227.FBpp0085002"/>
<dbReference type="PaxDb" id="7227-FBpp0085002"/>
<dbReference type="EnsemblMetazoa" id="FBtr0085640">
    <property type="protein sequence ID" value="FBpp0085002"/>
    <property type="gene ID" value="FBgn0000278"/>
</dbReference>
<dbReference type="GeneID" id="43598"/>
<dbReference type="KEGG" id="dme:Dmel_CG1878"/>
<dbReference type="AGR" id="FB:FBgn0000278"/>
<dbReference type="CTD" id="43598"/>
<dbReference type="FlyBase" id="FBgn0000278">
    <property type="gene designation" value="CecB"/>
</dbReference>
<dbReference type="VEuPathDB" id="VectorBase:FBgn0000278"/>
<dbReference type="eggNOG" id="ENOG502TCNK">
    <property type="taxonomic scope" value="Eukaryota"/>
</dbReference>
<dbReference type="GeneTree" id="ENSGT00540000073806"/>
<dbReference type="HOGENOM" id="CLU_187909_1_0_1"/>
<dbReference type="InParanoid" id="P14956"/>
<dbReference type="OMA" id="GHSEANW"/>
<dbReference type="OrthoDB" id="7410372at2759"/>
<dbReference type="PhylomeDB" id="P14956"/>
<dbReference type="BioGRID-ORCS" id="43598">
    <property type="hits" value="0 hits in 1 CRISPR screen"/>
</dbReference>
<dbReference type="GenomeRNAi" id="43598"/>
<dbReference type="PRO" id="PR:P14956"/>
<dbReference type="Proteomes" id="UP000000803">
    <property type="component" value="Chromosome 3R"/>
</dbReference>
<dbReference type="Bgee" id="FBgn0000278">
    <property type="expression patterns" value="Expressed in adult abdominal pericardial cell (Drosophila) in dorsal vessel heart and 20 other cell types or tissues"/>
</dbReference>
<dbReference type="ExpressionAtlas" id="P14956">
    <property type="expression patterns" value="baseline and differential"/>
</dbReference>
<dbReference type="GO" id="GO:0005576">
    <property type="term" value="C:extracellular region"/>
    <property type="evidence" value="ECO:0000314"/>
    <property type="project" value="UniProtKB"/>
</dbReference>
<dbReference type="GO" id="GO:0005615">
    <property type="term" value="C:extracellular space"/>
    <property type="evidence" value="ECO:0000314"/>
    <property type="project" value="FlyBase"/>
</dbReference>
<dbReference type="GO" id="GO:0019731">
    <property type="term" value="P:antibacterial humoral response"/>
    <property type="evidence" value="ECO:0000314"/>
    <property type="project" value="FlyBase"/>
</dbReference>
<dbReference type="GO" id="GO:0050829">
    <property type="term" value="P:defense response to Gram-negative bacterium"/>
    <property type="evidence" value="ECO:0000314"/>
    <property type="project" value="UniProtKB"/>
</dbReference>
<dbReference type="GO" id="GO:0050830">
    <property type="term" value="P:defense response to Gram-positive bacterium"/>
    <property type="evidence" value="ECO:0000314"/>
    <property type="project" value="UniProtKB"/>
</dbReference>
<dbReference type="GO" id="GO:0002213">
    <property type="term" value="P:defense response to insect"/>
    <property type="evidence" value="ECO:0000270"/>
    <property type="project" value="FlyBase"/>
</dbReference>
<dbReference type="GO" id="GO:0051607">
    <property type="term" value="P:defense response to virus"/>
    <property type="evidence" value="ECO:0000316"/>
    <property type="project" value="FlyBase"/>
</dbReference>
<dbReference type="GO" id="GO:0006959">
    <property type="term" value="P:humoral immune response"/>
    <property type="evidence" value="ECO:0000270"/>
    <property type="project" value="FlyBase"/>
</dbReference>
<dbReference type="GO" id="GO:0045087">
    <property type="term" value="P:innate immune response"/>
    <property type="evidence" value="ECO:0007669"/>
    <property type="project" value="UniProtKB-KW"/>
</dbReference>
<dbReference type="GO" id="GO:0140460">
    <property type="term" value="P:response to Gram-negative bacterium"/>
    <property type="evidence" value="ECO:0000316"/>
    <property type="project" value="FlyBase"/>
</dbReference>
<dbReference type="InterPro" id="IPR000875">
    <property type="entry name" value="Cecropin"/>
</dbReference>
<dbReference type="InterPro" id="IPR020400">
    <property type="entry name" value="Cecropin_insect"/>
</dbReference>
<dbReference type="PANTHER" id="PTHR38329">
    <property type="entry name" value="CECROPIN-A1-RELATED"/>
    <property type="match status" value="1"/>
</dbReference>
<dbReference type="PANTHER" id="PTHR38329:SF1">
    <property type="entry name" value="CECROPIN-A1-RELATED"/>
    <property type="match status" value="1"/>
</dbReference>
<dbReference type="Pfam" id="PF00272">
    <property type="entry name" value="Cecropin"/>
    <property type="match status" value="1"/>
</dbReference>
<dbReference type="PROSITE" id="PS00268">
    <property type="entry name" value="CECROPIN"/>
    <property type="match status" value="1"/>
</dbReference>
<reference key="1">
    <citation type="journal article" date="1990" name="EMBO J.">
        <title>The cecropin locus in Drosophila; a compact gene cluster involved in the response to infection.</title>
        <authorList>
            <person name="Kylsten P."/>
            <person name="Samakovlis C."/>
            <person name="Hultmark D."/>
        </authorList>
    </citation>
    <scope>NUCLEOTIDE SEQUENCE [GENOMIC DNA]</scope>
    <source>
        <strain>Canton-S</strain>
    </source>
</reference>
<reference key="2">
    <citation type="journal article" date="1997" name="Genetics">
        <title>Molecular population genetics of Drosophila immune system genes.</title>
        <authorList>
            <person name="Clark A.G."/>
            <person name="Wang L."/>
        </authorList>
    </citation>
    <scope>NUCLEOTIDE SEQUENCE [GENOMIC DNA]</scope>
    <scope>VARIANTS LEU-10; ILE-12; VAL-43 AND GLY-59</scope>
    <source>
        <strain>B115</strain>
        <strain>B137</strain>
        <strain>B141</strain>
        <strain>B202</strain>
        <strain>B208</strain>
        <strain>B222</strain>
        <strain>B225</strain>
        <strain>B226</strain>
        <strain>Z10</strain>
        <strain>Z18</strain>
        <strain>Z22</strain>
        <strain>Z24</strain>
    </source>
</reference>
<reference key="3">
    <citation type="journal article" date="1998" name="Genetics">
        <title>Molecular evolution of the Cecropin multigene family in Drosophila: functional genes vs pseudogenes.</title>
        <authorList>
            <person name="Ramos-Onsins S."/>
            <person name="Aguade M."/>
        </authorList>
    </citation>
    <scope>NUCLEOTIDE SEQUENCE [GENOMIC DNA]</scope>
    <scope>VARIANT LEU-10</scope>
    <source>
        <strain>M11</strain>
        <strain>M2</strain>
        <strain>M26</strain>
        <strain>M40</strain>
        <strain>M47</strain>
        <strain>M54</strain>
        <strain>M55</strain>
        <strain>M66</strain>
    </source>
</reference>
<reference key="4">
    <citation type="journal article" date="1998" name="Immunogenetics">
        <title>Evolutionary history and mechanism of the Drosophila cecropin gene family.</title>
        <authorList>
            <person name="Date A."/>
            <person name="Satta Y."/>
            <person name="Takahata N."/>
            <person name="Chigusa S.I."/>
        </authorList>
    </citation>
    <scope>NUCLEOTIDE SEQUENCE [GENOMIC DNA]</scope>
    <scope>VARIANTS LEU-10 AND VAL-54</scope>
    <source>
        <strain>MA1</strain>
        <strain>MA2</strain>
        <strain>MA3</strain>
        <strain>MJ1</strain>
        <strain>MJ2</strain>
        <strain>MJ3</strain>
    </source>
</reference>
<reference key="5">
    <citation type="journal article" date="2000" name="Science">
        <title>The genome sequence of Drosophila melanogaster.</title>
        <authorList>
            <person name="Adams M.D."/>
            <person name="Celniker S.E."/>
            <person name="Holt R.A."/>
            <person name="Evans C.A."/>
            <person name="Gocayne J.D."/>
            <person name="Amanatides P.G."/>
            <person name="Scherer S.E."/>
            <person name="Li P.W."/>
            <person name="Hoskins R.A."/>
            <person name="Galle R.F."/>
            <person name="George R.A."/>
            <person name="Lewis S.E."/>
            <person name="Richards S."/>
            <person name="Ashburner M."/>
            <person name="Henderson S.N."/>
            <person name="Sutton G.G."/>
            <person name="Wortman J.R."/>
            <person name="Yandell M.D."/>
            <person name="Zhang Q."/>
            <person name="Chen L.X."/>
            <person name="Brandon R.C."/>
            <person name="Rogers Y.-H.C."/>
            <person name="Blazej R.G."/>
            <person name="Champe M."/>
            <person name="Pfeiffer B.D."/>
            <person name="Wan K.H."/>
            <person name="Doyle C."/>
            <person name="Baxter E.G."/>
            <person name="Helt G."/>
            <person name="Nelson C.R."/>
            <person name="Miklos G.L.G."/>
            <person name="Abril J.F."/>
            <person name="Agbayani A."/>
            <person name="An H.-J."/>
            <person name="Andrews-Pfannkoch C."/>
            <person name="Baldwin D."/>
            <person name="Ballew R.M."/>
            <person name="Basu A."/>
            <person name="Baxendale J."/>
            <person name="Bayraktaroglu L."/>
            <person name="Beasley E.M."/>
            <person name="Beeson K.Y."/>
            <person name="Benos P.V."/>
            <person name="Berman B.P."/>
            <person name="Bhandari D."/>
            <person name="Bolshakov S."/>
            <person name="Borkova D."/>
            <person name="Botchan M.R."/>
            <person name="Bouck J."/>
            <person name="Brokstein P."/>
            <person name="Brottier P."/>
            <person name="Burtis K.C."/>
            <person name="Busam D.A."/>
            <person name="Butler H."/>
            <person name="Cadieu E."/>
            <person name="Center A."/>
            <person name="Chandra I."/>
            <person name="Cherry J.M."/>
            <person name="Cawley S."/>
            <person name="Dahlke C."/>
            <person name="Davenport L.B."/>
            <person name="Davies P."/>
            <person name="de Pablos B."/>
            <person name="Delcher A."/>
            <person name="Deng Z."/>
            <person name="Mays A.D."/>
            <person name="Dew I."/>
            <person name="Dietz S.M."/>
            <person name="Dodson K."/>
            <person name="Doup L.E."/>
            <person name="Downes M."/>
            <person name="Dugan-Rocha S."/>
            <person name="Dunkov B.C."/>
            <person name="Dunn P."/>
            <person name="Durbin K.J."/>
            <person name="Evangelista C.C."/>
            <person name="Ferraz C."/>
            <person name="Ferriera S."/>
            <person name="Fleischmann W."/>
            <person name="Fosler C."/>
            <person name="Gabrielian A.E."/>
            <person name="Garg N.S."/>
            <person name="Gelbart W.M."/>
            <person name="Glasser K."/>
            <person name="Glodek A."/>
            <person name="Gong F."/>
            <person name="Gorrell J.H."/>
            <person name="Gu Z."/>
            <person name="Guan P."/>
            <person name="Harris M."/>
            <person name="Harris N.L."/>
            <person name="Harvey D.A."/>
            <person name="Heiman T.J."/>
            <person name="Hernandez J.R."/>
            <person name="Houck J."/>
            <person name="Hostin D."/>
            <person name="Houston K.A."/>
            <person name="Howland T.J."/>
            <person name="Wei M.-H."/>
            <person name="Ibegwam C."/>
            <person name="Jalali M."/>
            <person name="Kalush F."/>
            <person name="Karpen G.H."/>
            <person name="Ke Z."/>
            <person name="Kennison J.A."/>
            <person name="Ketchum K.A."/>
            <person name="Kimmel B.E."/>
            <person name="Kodira C.D."/>
            <person name="Kraft C.L."/>
            <person name="Kravitz S."/>
            <person name="Kulp D."/>
            <person name="Lai Z."/>
            <person name="Lasko P."/>
            <person name="Lei Y."/>
            <person name="Levitsky A.A."/>
            <person name="Li J.H."/>
            <person name="Li Z."/>
            <person name="Liang Y."/>
            <person name="Lin X."/>
            <person name="Liu X."/>
            <person name="Mattei B."/>
            <person name="McIntosh T.C."/>
            <person name="McLeod M.P."/>
            <person name="McPherson D."/>
            <person name="Merkulov G."/>
            <person name="Milshina N.V."/>
            <person name="Mobarry C."/>
            <person name="Morris J."/>
            <person name="Moshrefi A."/>
            <person name="Mount S.M."/>
            <person name="Moy M."/>
            <person name="Murphy B."/>
            <person name="Murphy L."/>
            <person name="Muzny D.M."/>
            <person name="Nelson D.L."/>
            <person name="Nelson D.R."/>
            <person name="Nelson K.A."/>
            <person name="Nixon K."/>
            <person name="Nusskern D.R."/>
            <person name="Pacleb J.M."/>
            <person name="Palazzolo M."/>
            <person name="Pittman G.S."/>
            <person name="Pan S."/>
            <person name="Pollard J."/>
            <person name="Puri V."/>
            <person name="Reese M.G."/>
            <person name="Reinert K."/>
            <person name="Remington K."/>
            <person name="Saunders R.D.C."/>
            <person name="Scheeler F."/>
            <person name="Shen H."/>
            <person name="Shue B.C."/>
            <person name="Siden-Kiamos I."/>
            <person name="Simpson M."/>
            <person name="Skupski M.P."/>
            <person name="Smith T.J."/>
            <person name="Spier E."/>
            <person name="Spradling A.C."/>
            <person name="Stapleton M."/>
            <person name="Strong R."/>
            <person name="Sun E."/>
            <person name="Svirskas R."/>
            <person name="Tector C."/>
            <person name="Turner R."/>
            <person name="Venter E."/>
            <person name="Wang A.H."/>
            <person name="Wang X."/>
            <person name="Wang Z.-Y."/>
            <person name="Wassarman D.A."/>
            <person name="Weinstock G.M."/>
            <person name="Weissenbach J."/>
            <person name="Williams S.M."/>
            <person name="Woodage T."/>
            <person name="Worley K.C."/>
            <person name="Wu D."/>
            <person name="Yang S."/>
            <person name="Yao Q.A."/>
            <person name="Ye J."/>
            <person name="Yeh R.-F."/>
            <person name="Zaveri J.S."/>
            <person name="Zhan M."/>
            <person name="Zhang G."/>
            <person name="Zhao Q."/>
            <person name="Zheng L."/>
            <person name="Zheng X.H."/>
            <person name="Zhong F.N."/>
            <person name="Zhong W."/>
            <person name="Zhou X."/>
            <person name="Zhu S.C."/>
            <person name="Zhu X."/>
            <person name="Smith H.O."/>
            <person name="Gibbs R.A."/>
            <person name="Myers E.W."/>
            <person name="Rubin G.M."/>
            <person name="Venter J.C."/>
        </authorList>
    </citation>
    <scope>NUCLEOTIDE SEQUENCE [LARGE SCALE GENOMIC DNA]</scope>
    <source>
        <strain>Berkeley</strain>
    </source>
</reference>
<reference key="6">
    <citation type="journal article" date="2002" name="Genome Biol.">
        <title>Annotation of the Drosophila melanogaster euchromatic genome: a systematic review.</title>
        <authorList>
            <person name="Misra S."/>
            <person name="Crosby M.A."/>
            <person name="Mungall C.J."/>
            <person name="Matthews B.B."/>
            <person name="Campbell K.S."/>
            <person name="Hradecky P."/>
            <person name="Huang Y."/>
            <person name="Kaminker J.S."/>
            <person name="Millburn G.H."/>
            <person name="Prochnik S.E."/>
            <person name="Smith C.D."/>
            <person name="Tupy J.L."/>
            <person name="Whitfield E.J."/>
            <person name="Bayraktaroglu L."/>
            <person name="Berman B.P."/>
            <person name="Bettencourt B.R."/>
            <person name="Celniker S.E."/>
            <person name="de Grey A.D.N.J."/>
            <person name="Drysdale R.A."/>
            <person name="Harris N.L."/>
            <person name="Richter J."/>
            <person name="Russo S."/>
            <person name="Schroeder A.J."/>
            <person name="Shu S.Q."/>
            <person name="Stapleton M."/>
            <person name="Yamada C."/>
            <person name="Ashburner M."/>
            <person name="Gelbart W.M."/>
            <person name="Rubin G.M."/>
            <person name="Lewis S.E."/>
        </authorList>
    </citation>
    <scope>GENOME REANNOTATION</scope>
    <source>
        <strain>Berkeley</strain>
    </source>
</reference>
<reference key="7">
    <citation type="journal article" date="1990" name="EMBO J.">
        <title>The immune response in Drosophila: pattern of cecropin expression and biological activity.</title>
        <authorList>
            <person name="Samakovlis C."/>
            <person name="Kimbrell D.A."/>
            <person name="Kylsten P."/>
            <person name="Engstrom A."/>
            <person name="Hultmark D."/>
        </authorList>
    </citation>
    <scope>INDUCTION</scope>
    <scope>TISSUE SPECIFICITY</scope>
    <source>
        <strain>Canton-S</strain>
    </source>
</reference>
<gene>
    <name type="primary">CecB</name>
    <name type="ORF">CG1878</name>
</gene>
<evidence type="ECO:0000250" key="1"/>
<evidence type="ECO:0000269" key="2">
    <source>
    </source>
</evidence>
<evidence type="ECO:0000269" key="3">
    <source>
    </source>
</evidence>
<evidence type="ECO:0000269" key="4">
    <source>
    </source>
</evidence>
<evidence type="ECO:0000269" key="5">
    <source>
    </source>
</evidence>
<evidence type="ECO:0000305" key="6"/>
<accession>P14956</accession>
<accession>O16826</accession>
<accession>O16827</accession>
<accession>O16828</accession>
<accession>O18647</accession>
<accession>O61274</accession>
<accession>Q9V425</accession>
<name>CECB_DROME</name>
<sequence length="63" mass="6778">MNFNKIFVFVALILAISLGNSEAGWLRKLGKKIERIGQHTRDASIQVLGIAQQAANVAATARG</sequence>
<keyword id="KW-0027">Amidation</keyword>
<keyword id="KW-0044">Antibiotic</keyword>
<keyword id="KW-0929">Antimicrobial</keyword>
<keyword id="KW-0391">Immunity</keyword>
<keyword id="KW-0399">Innate immunity</keyword>
<keyword id="KW-1185">Reference proteome</keyword>
<keyword id="KW-0964">Secreted</keyword>
<keyword id="KW-0732">Signal</keyword>
<feature type="signal peptide">
    <location>
        <begin position="1"/>
        <end position="23"/>
    </location>
</feature>
<feature type="chain" id="PRO_0000004843" description="Cecropin-B">
    <location>
        <begin position="24"/>
        <end position="62"/>
    </location>
</feature>
<feature type="modified residue" description="Arginine amide" evidence="1">
    <location>
        <position position="62"/>
    </location>
</feature>
<feature type="sequence variant" description="In strain: B141, M2, M40 and MJ2." evidence="3 4 5">
    <original>V</original>
    <variation>L</variation>
    <location>
        <position position="10"/>
    </location>
</feature>
<feature type="sequence variant" description="In strain: B208." evidence="3">
    <original>L</original>
    <variation>I</variation>
    <location>
        <position position="12"/>
    </location>
</feature>
<feature type="sequence variant" description="In strain: Z24." evidence="3">
    <original>A</original>
    <variation>V</variation>
    <location>
        <position position="43"/>
    </location>
</feature>
<feature type="sequence variant" description="In strain: MA1." evidence="4">
    <original>A</original>
    <variation>V</variation>
    <location>
        <position position="54"/>
    </location>
</feature>
<feature type="sequence variant" description="In strain: B222, B226, Z10, Z22, Z18 and Z24." evidence="3">
    <original>A</original>
    <variation>G</variation>
    <location>
        <position position="59"/>
    </location>
</feature>